<comment type="function">
    <text evidence="1">Nucleotidase that shows phosphatase activity on nucleoside 5'-monophosphates.</text>
</comment>
<comment type="catalytic activity">
    <reaction evidence="1">
        <text>a ribonucleoside 5'-phosphate + H2O = a ribonucleoside + phosphate</text>
        <dbReference type="Rhea" id="RHEA:12484"/>
        <dbReference type="ChEBI" id="CHEBI:15377"/>
        <dbReference type="ChEBI" id="CHEBI:18254"/>
        <dbReference type="ChEBI" id="CHEBI:43474"/>
        <dbReference type="ChEBI" id="CHEBI:58043"/>
        <dbReference type="EC" id="3.1.3.5"/>
    </reaction>
</comment>
<comment type="cofactor">
    <cofactor evidence="1">
        <name>a divalent metal cation</name>
        <dbReference type="ChEBI" id="CHEBI:60240"/>
    </cofactor>
    <text evidence="1">Binds 1 divalent metal cation per subunit.</text>
</comment>
<comment type="subcellular location">
    <subcellularLocation>
        <location evidence="1">Cytoplasm</location>
    </subcellularLocation>
</comment>
<comment type="similarity">
    <text evidence="1">Belongs to the SurE nucleotidase family.</text>
</comment>
<sequence>MRILVANDDGYLAPGLAALVAVCKEFGDVEVVAPEQNASGTSNALTLTRPLSVHTAANGFRYVNGTPSDCVHVALTGLLAQRPDLVVSGINNGANMGDDTIYSGTVAAAMEGYLFGVPAIAFSLVDKGWSHLDAATRAARGVLAHVLASGWHREHWLLNVNIPSRPDAAELPLQITRLGKRHASEPVICQTSPRGEPIYWIGAAGDAREAGEGTDFHAVANGHVSITPLQVDLTDHGRLGTWSQRWQDHGSRA</sequence>
<protein>
    <recommendedName>
        <fullName evidence="1">5'-nucleotidase SurE</fullName>
        <ecNumber evidence="1">3.1.3.5</ecNumber>
    </recommendedName>
    <alternativeName>
        <fullName evidence="1">Nucleoside 5'-monophosphate phosphohydrolase</fullName>
    </alternativeName>
</protein>
<organism>
    <name type="scientific">Leptothrix cholodnii (strain ATCC 51168 / LMG 8142 / SP-6)</name>
    <name type="common">Leptothrix discophora (strain SP-6)</name>
    <dbReference type="NCBI Taxonomy" id="395495"/>
    <lineage>
        <taxon>Bacteria</taxon>
        <taxon>Pseudomonadati</taxon>
        <taxon>Pseudomonadota</taxon>
        <taxon>Betaproteobacteria</taxon>
        <taxon>Burkholderiales</taxon>
        <taxon>Sphaerotilaceae</taxon>
        <taxon>Leptothrix</taxon>
    </lineage>
</organism>
<keyword id="KW-0963">Cytoplasm</keyword>
<keyword id="KW-0378">Hydrolase</keyword>
<keyword id="KW-0479">Metal-binding</keyword>
<keyword id="KW-0547">Nucleotide-binding</keyword>
<keyword id="KW-1185">Reference proteome</keyword>
<evidence type="ECO:0000255" key="1">
    <source>
        <dbReference type="HAMAP-Rule" id="MF_00060"/>
    </source>
</evidence>
<feature type="chain" id="PRO_1000092015" description="5'-nucleotidase SurE">
    <location>
        <begin position="1"/>
        <end position="253"/>
    </location>
</feature>
<feature type="binding site" evidence="1">
    <location>
        <position position="8"/>
    </location>
    <ligand>
        <name>a divalent metal cation</name>
        <dbReference type="ChEBI" id="CHEBI:60240"/>
    </ligand>
</feature>
<feature type="binding site" evidence="1">
    <location>
        <position position="9"/>
    </location>
    <ligand>
        <name>a divalent metal cation</name>
        <dbReference type="ChEBI" id="CHEBI:60240"/>
    </ligand>
</feature>
<feature type="binding site" evidence="1">
    <location>
        <position position="39"/>
    </location>
    <ligand>
        <name>a divalent metal cation</name>
        <dbReference type="ChEBI" id="CHEBI:60240"/>
    </ligand>
</feature>
<feature type="binding site" evidence="1">
    <location>
        <position position="91"/>
    </location>
    <ligand>
        <name>a divalent metal cation</name>
        <dbReference type="ChEBI" id="CHEBI:60240"/>
    </ligand>
</feature>
<name>SURE_LEPCP</name>
<gene>
    <name evidence="1" type="primary">surE</name>
    <name type="ordered locus">Lcho_1922</name>
</gene>
<reference key="1">
    <citation type="submission" date="2008-03" db="EMBL/GenBank/DDBJ databases">
        <title>Complete sequence of Leptothrix cholodnii SP-6.</title>
        <authorList>
            <consortium name="US DOE Joint Genome Institute"/>
            <person name="Copeland A."/>
            <person name="Lucas S."/>
            <person name="Lapidus A."/>
            <person name="Glavina del Rio T."/>
            <person name="Dalin E."/>
            <person name="Tice H."/>
            <person name="Bruce D."/>
            <person name="Goodwin L."/>
            <person name="Pitluck S."/>
            <person name="Chertkov O."/>
            <person name="Brettin T."/>
            <person name="Detter J.C."/>
            <person name="Han C."/>
            <person name="Kuske C.R."/>
            <person name="Schmutz J."/>
            <person name="Larimer F."/>
            <person name="Land M."/>
            <person name="Hauser L."/>
            <person name="Kyrpides N."/>
            <person name="Lykidis A."/>
            <person name="Emerson D."/>
            <person name="Richardson P."/>
        </authorList>
    </citation>
    <scope>NUCLEOTIDE SEQUENCE [LARGE SCALE GENOMIC DNA]</scope>
    <source>
        <strain>ATCC 51168 / LMG 8142 / SP-6</strain>
    </source>
</reference>
<accession>B1Y0T1</accession>
<dbReference type="EC" id="3.1.3.5" evidence="1"/>
<dbReference type="EMBL" id="CP001013">
    <property type="protein sequence ID" value="ACB34189.1"/>
    <property type="molecule type" value="Genomic_DNA"/>
</dbReference>
<dbReference type="RefSeq" id="WP_012346950.1">
    <property type="nucleotide sequence ID" value="NC_010524.1"/>
</dbReference>
<dbReference type="SMR" id="B1Y0T1"/>
<dbReference type="STRING" id="395495.Lcho_1922"/>
<dbReference type="KEGG" id="lch:Lcho_1922"/>
<dbReference type="eggNOG" id="COG0496">
    <property type="taxonomic scope" value="Bacteria"/>
</dbReference>
<dbReference type="HOGENOM" id="CLU_045192_1_2_4"/>
<dbReference type="OrthoDB" id="9780815at2"/>
<dbReference type="Proteomes" id="UP000001693">
    <property type="component" value="Chromosome"/>
</dbReference>
<dbReference type="GO" id="GO:0005737">
    <property type="term" value="C:cytoplasm"/>
    <property type="evidence" value="ECO:0007669"/>
    <property type="project" value="UniProtKB-SubCell"/>
</dbReference>
<dbReference type="GO" id="GO:0008254">
    <property type="term" value="F:3'-nucleotidase activity"/>
    <property type="evidence" value="ECO:0007669"/>
    <property type="project" value="TreeGrafter"/>
</dbReference>
<dbReference type="GO" id="GO:0008253">
    <property type="term" value="F:5'-nucleotidase activity"/>
    <property type="evidence" value="ECO:0007669"/>
    <property type="project" value="UniProtKB-UniRule"/>
</dbReference>
<dbReference type="GO" id="GO:0004309">
    <property type="term" value="F:exopolyphosphatase activity"/>
    <property type="evidence" value="ECO:0007669"/>
    <property type="project" value="TreeGrafter"/>
</dbReference>
<dbReference type="GO" id="GO:0046872">
    <property type="term" value="F:metal ion binding"/>
    <property type="evidence" value="ECO:0007669"/>
    <property type="project" value="UniProtKB-UniRule"/>
</dbReference>
<dbReference type="GO" id="GO:0000166">
    <property type="term" value="F:nucleotide binding"/>
    <property type="evidence" value="ECO:0007669"/>
    <property type="project" value="UniProtKB-KW"/>
</dbReference>
<dbReference type="FunFam" id="3.40.1210.10:FF:000001">
    <property type="entry name" value="5'/3'-nucleotidase SurE"/>
    <property type="match status" value="1"/>
</dbReference>
<dbReference type="Gene3D" id="3.40.1210.10">
    <property type="entry name" value="Survival protein SurE-like phosphatase/nucleotidase"/>
    <property type="match status" value="1"/>
</dbReference>
<dbReference type="HAMAP" id="MF_00060">
    <property type="entry name" value="SurE"/>
    <property type="match status" value="1"/>
</dbReference>
<dbReference type="InterPro" id="IPR030048">
    <property type="entry name" value="SurE"/>
</dbReference>
<dbReference type="InterPro" id="IPR002828">
    <property type="entry name" value="SurE-like_Pase/nucleotidase"/>
</dbReference>
<dbReference type="InterPro" id="IPR036523">
    <property type="entry name" value="SurE-like_sf"/>
</dbReference>
<dbReference type="NCBIfam" id="NF001489">
    <property type="entry name" value="PRK00346.1-3"/>
    <property type="match status" value="1"/>
</dbReference>
<dbReference type="NCBIfam" id="NF001490">
    <property type="entry name" value="PRK00346.1-4"/>
    <property type="match status" value="1"/>
</dbReference>
<dbReference type="NCBIfam" id="TIGR00087">
    <property type="entry name" value="surE"/>
    <property type="match status" value="1"/>
</dbReference>
<dbReference type="PANTHER" id="PTHR30457">
    <property type="entry name" value="5'-NUCLEOTIDASE SURE"/>
    <property type="match status" value="1"/>
</dbReference>
<dbReference type="PANTHER" id="PTHR30457:SF12">
    <property type="entry name" value="5'_3'-NUCLEOTIDASE SURE"/>
    <property type="match status" value="1"/>
</dbReference>
<dbReference type="Pfam" id="PF01975">
    <property type="entry name" value="SurE"/>
    <property type="match status" value="1"/>
</dbReference>
<dbReference type="SUPFAM" id="SSF64167">
    <property type="entry name" value="SurE-like"/>
    <property type="match status" value="1"/>
</dbReference>
<proteinExistence type="inferred from homology"/>